<comment type="function">
    <text evidence="1">NDH-1 shuttles electrons from NADH, via FMN and iron-sulfur (Fe-S) centers, to quinones in the respiratory chain. The immediate electron acceptor for the enzyme in this species is believed to be ubiquinone. Couples the redox reaction to proton translocation (for every two electrons transferred, four hydrogen ions are translocated across the cytoplasmic membrane), and thus conserves the redox energy in a proton gradient. This subunit may bind ubiquinone.</text>
</comment>
<comment type="catalytic activity">
    <reaction evidence="1">
        <text>a quinone + NADH + 5 H(+)(in) = a quinol + NAD(+) + 4 H(+)(out)</text>
        <dbReference type="Rhea" id="RHEA:57888"/>
        <dbReference type="ChEBI" id="CHEBI:15378"/>
        <dbReference type="ChEBI" id="CHEBI:24646"/>
        <dbReference type="ChEBI" id="CHEBI:57540"/>
        <dbReference type="ChEBI" id="CHEBI:57945"/>
        <dbReference type="ChEBI" id="CHEBI:132124"/>
    </reaction>
</comment>
<comment type="subunit">
    <text evidence="1">NDH-1 is composed of 14 different subunits. Subunits NuoA, H, J, K, L, M, N constitute the membrane sector of the complex.</text>
</comment>
<comment type="subcellular location">
    <subcellularLocation>
        <location evidence="1">Cell inner membrane</location>
        <topology evidence="1">Multi-pass membrane protein</topology>
    </subcellularLocation>
</comment>
<comment type="similarity">
    <text evidence="1">Belongs to the complex I subunit 1 family.</text>
</comment>
<reference key="1">
    <citation type="submission" date="2006-09" db="EMBL/GenBank/DDBJ databases">
        <title>Complete sequence of Rhodopseudomonas palustris BisA53.</title>
        <authorList>
            <consortium name="US DOE Joint Genome Institute"/>
            <person name="Copeland A."/>
            <person name="Lucas S."/>
            <person name="Lapidus A."/>
            <person name="Barry K."/>
            <person name="Detter J.C."/>
            <person name="Glavina del Rio T."/>
            <person name="Hammon N."/>
            <person name="Israni S."/>
            <person name="Dalin E."/>
            <person name="Tice H."/>
            <person name="Pitluck S."/>
            <person name="Chain P."/>
            <person name="Malfatti S."/>
            <person name="Shin M."/>
            <person name="Vergez L."/>
            <person name="Schmutz J."/>
            <person name="Larimer F."/>
            <person name="Land M."/>
            <person name="Hauser L."/>
            <person name="Pelletier D.A."/>
            <person name="Kyrpides N."/>
            <person name="Kim E."/>
            <person name="Harwood C.S."/>
            <person name="Oda Y."/>
            <person name="Richardson P."/>
        </authorList>
    </citation>
    <scope>NUCLEOTIDE SEQUENCE [LARGE SCALE GENOMIC DNA]</scope>
    <source>
        <strain>BisA53</strain>
    </source>
</reference>
<gene>
    <name evidence="1" type="primary">nuoH1</name>
    <name type="ordered locus">RPE_1716</name>
</gene>
<dbReference type="EC" id="7.1.1.-" evidence="1"/>
<dbReference type="EMBL" id="CP000463">
    <property type="protein sequence ID" value="ABJ05665.1"/>
    <property type="molecule type" value="Genomic_DNA"/>
</dbReference>
<dbReference type="SMR" id="Q07QW9"/>
<dbReference type="STRING" id="316055.RPE_1716"/>
<dbReference type="KEGG" id="rpe:RPE_1716"/>
<dbReference type="eggNOG" id="COG1005">
    <property type="taxonomic scope" value="Bacteria"/>
</dbReference>
<dbReference type="HOGENOM" id="CLU_015134_0_1_5"/>
<dbReference type="OrthoDB" id="9803734at2"/>
<dbReference type="GO" id="GO:0005886">
    <property type="term" value="C:plasma membrane"/>
    <property type="evidence" value="ECO:0007669"/>
    <property type="project" value="UniProtKB-SubCell"/>
</dbReference>
<dbReference type="GO" id="GO:0003954">
    <property type="term" value="F:NADH dehydrogenase activity"/>
    <property type="evidence" value="ECO:0007669"/>
    <property type="project" value="TreeGrafter"/>
</dbReference>
<dbReference type="GO" id="GO:0016655">
    <property type="term" value="F:oxidoreductase activity, acting on NAD(P)H, quinone or similar compound as acceptor"/>
    <property type="evidence" value="ECO:0007669"/>
    <property type="project" value="UniProtKB-UniRule"/>
</dbReference>
<dbReference type="GO" id="GO:0048038">
    <property type="term" value="F:quinone binding"/>
    <property type="evidence" value="ECO:0007669"/>
    <property type="project" value="UniProtKB-KW"/>
</dbReference>
<dbReference type="GO" id="GO:0009060">
    <property type="term" value="P:aerobic respiration"/>
    <property type="evidence" value="ECO:0007669"/>
    <property type="project" value="TreeGrafter"/>
</dbReference>
<dbReference type="HAMAP" id="MF_01350">
    <property type="entry name" value="NDH1_NuoH"/>
    <property type="match status" value="1"/>
</dbReference>
<dbReference type="InterPro" id="IPR001694">
    <property type="entry name" value="NADH_UbQ_OxRdtase_su1/FPO"/>
</dbReference>
<dbReference type="InterPro" id="IPR018086">
    <property type="entry name" value="NADH_UbQ_OxRdtase_su1_CS"/>
</dbReference>
<dbReference type="NCBIfam" id="NF004741">
    <property type="entry name" value="PRK06076.1-2"/>
    <property type="match status" value="1"/>
</dbReference>
<dbReference type="PANTHER" id="PTHR11432">
    <property type="entry name" value="NADH DEHYDROGENASE SUBUNIT 1"/>
    <property type="match status" value="1"/>
</dbReference>
<dbReference type="PANTHER" id="PTHR11432:SF3">
    <property type="entry name" value="NADH-UBIQUINONE OXIDOREDUCTASE CHAIN 1"/>
    <property type="match status" value="1"/>
</dbReference>
<dbReference type="Pfam" id="PF00146">
    <property type="entry name" value="NADHdh"/>
    <property type="match status" value="1"/>
</dbReference>
<dbReference type="PROSITE" id="PS00668">
    <property type="entry name" value="COMPLEX1_ND1_2"/>
    <property type="match status" value="1"/>
</dbReference>
<sequence length="319" mass="34031">MIGMILTAIISTTLIMALLVAAGVFTWVERRLLAFVQERLGPNRVGPFGFLQWVADTVKIIAKEDEIPPGADRVAYRLAPAVAATPVLAGFGVVAFGENLALAEIDVGVMFLLGMMGLTAYAVVLGALASPSRFSLIGGLRAAAQMLAYEAFLGLSMLGVVMIAGSLSMSEIVRAQENVWFIVLQPIGAALFTLGGIAAAHRTPFDLPESENDLVGGYITEYTGMSFGLFFLGEYLAILLVSAFAVTLFFGGWLGPWLPGPIWFGLKTGVIAAMFVWIRAALPRPRYDQMVTMAWKVALPLALANVLITGFIVVARSAP</sequence>
<evidence type="ECO:0000255" key="1">
    <source>
        <dbReference type="HAMAP-Rule" id="MF_01350"/>
    </source>
</evidence>
<organism>
    <name type="scientific">Rhodopseudomonas palustris (strain BisA53)</name>
    <dbReference type="NCBI Taxonomy" id="316055"/>
    <lineage>
        <taxon>Bacteria</taxon>
        <taxon>Pseudomonadati</taxon>
        <taxon>Pseudomonadota</taxon>
        <taxon>Alphaproteobacteria</taxon>
        <taxon>Hyphomicrobiales</taxon>
        <taxon>Nitrobacteraceae</taxon>
        <taxon>Rhodopseudomonas</taxon>
    </lineage>
</organism>
<keyword id="KW-0997">Cell inner membrane</keyword>
<keyword id="KW-1003">Cell membrane</keyword>
<keyword id="KW-0472">Membrane</keyword>
<keyword id="KW-0520">NAD</keyword>
<keyword id="KW-0874">Quinone</keyword>
<keyword id="KW-1278">Translocase</keyword>
<keyword id="KW-0812">Transmembrane</keyword>
<keyword id="KW-1133">Transmembrane helix</keyword>
<keyword id="KW-0830">Ubiquinone</keyword>
<accession>Q07QW9</accession>
<proteinExistence type="inferred from homology"/>
<feature type="chain" id="PRO_5000133412" description="NADH-quinone oxidoreductase subunit H 1">
    <location>
        <begin position="1"/>
        <end position="319"/>
    </location>
</feature>
<feature type="transmembrane region" description="Helical" evidence="1">
    <location>
        <begin position="5"/>
        <end position="25"/>
    </location>
</feature>
<feature type="transmembrane region" description="Helical" evidence="1">
    <location>
        <begin position="78"/>
        <end position="98"/>
    </location>
</feature>
<feature type="transmembrane region" description="Helical" evidence="1">
    <location>
        <begin position="109"/>
        <end position="129"/>
    </location>
</feature>
<feature type="transmembrane region" description="Helical" evidence="1">
    <location>
        <begin position="147"/>
        <end position="167"/>
    </location>
</feature>
<feature type="transmembrane region" description="Helical" evidence="1">
    <location>
        <begin position="179"/>
        <end position="199"/>
    </location>
</feature>
<feature type="transmembrane region" description="Helical" evidence="1">
    <location>
        <begin position="214"/>
        <end position="234"/>
    </location>
</feature>
<feature type="transmembrane region" description="Helical" evidence="1">
    <location>
        <begin position="238"/>
        <end position="258"/>
    </location>
</feature>
<feature type="transmembrane region" description="Helical" evidence="1">
    <location>
        <begin position="262"/>
        <end position="282"/>
    </location>
</feature>
<feature type="transmembrane region" description="Helical" evidence="1">
    <location>
        <begin position="294"/>
        <end position="314"/>
    </location>
</feature>
<name>NUOH1_RHOP5</name>
<protein>
    <recommendedName>
        <fullName evidence="1">NADH-quinone oxidoreductase subunit H 1</fullName>
        <ecNumber evidence="1">7.1.1.-</ecNumber>
    </recommendedName>
    <alternativeName>
        <fullName evidence="1">NADH dehydrogenase I subunit H 1</fullName>
    </alternativeName>
    <alternativeName>
        <fullName evidence="1">NDH-1 subunit H 1</fullName>
    </alternativeName>
</protein>